<accession>C4ZR78</accession>
<reference key="1">
    <citation type="journal article" date="2009" name="J. Bacteriol.">
        <title>Genomic sequencing reveals regulatory mutations and recombinational events in the widely used MC4100 lineage of Escherichia coli K-12.</title>
        <authorList>
            <person name="Ferenci T."/>
            <person name="Zhou Z."/>
            <person name="Betteridge T."/>
            <person name="Ren Y."/>
            <person name="Liu Y."/>
            <person name="Feng L."/>
            <person name="Reeves P.R."/>
            <person name="Wang L."/>
        </authorList>
    </citation>
    <scope>NUCLEOTIDE SEQUENCE [LARGE SCALE GENOMIC DNA]</scope>
    <source>
        <strain>K12 / MC4100 / BW2952</strain>
    </source>
</reference>
<sequence>MTNRLVLSGTVCRAPLRKVSPSGIPHCQFVLEHRSVQEEAGFHRQAWCQMPVIVSGHENQAITHSITVGSRITVQGFISCHKAKNGLSKMVLHAEQIELIDSGD</sequence>
<proteinExistence type="inferred from homology"/>
<name>PRIB_ECOBW</name>
<protein>
    <recommendedName>
        <fullName evidence="1">Replication restart protein PriB</fullName>
    </recommendedName>
</protein>
<keyword id="KW-0235">DNA replication</keyword>
<keyword id="KW-0238">DNA-binding</keyword>
<keyword id="KW-0639">Primosome</keyword>
<organism>
    <name type="scientific">Escherichia coli (strain K12 / MC4100 / BW2952)</name>
    <dbReference type="NCBI Taxonomy" id="595496"/>
    <lineage>
        <taxon>Bacteria</taxon>
        <taxon>Pseudomonadati</taxon>
        <taxon>Pseudomonadota</taxon>
        <taxon>Gammaproteobacteria</taxon>
        <taxon>Enterobacterales</taxon>
        <taxon>Enterobacteriaceae</taxon>
        <taxon>Escherichia</taxon>
    </lineage>
</organism>
<dbReference type="EMBL" id="CP001396">
    <property type="protein sequence ID" value="ACR65273.1"/>
    <property type="molecule type" value="Genomic_DNA"/>
</dbReference>
<dbReference type="RefSeq" id="WP_001315977.1">
    <property type="nucleotide sequence ID" value="NC_012759.1"/>
</dbReference>
<dbReference type="SMR" id="C4ZR78"/>
<dbReference type="KEGG" id="ebw:BWG_3913"/>
<dbReference type="HOGENOM" id="CLU_166075_0_0_6"/>
<dbReference type="GO" id="GO:1990077">
    <property type="term" value="C:primosome complex"/>
    <property type="evidence" value="ECO:0007669"/>
    <property type="project" value="UniProtKB-KW"/>
</dbReference>
<dbReference type="GO" id="GO:0003697">
    <property type="term" value="F:single-stranded DNA binding"/>
    <property type="evidence" value="ECO:0007669"/>
    <property type="project" value="UniProtKB-UniRule"/>
</dbReference>
<dbReference type="GO" id="GO:0006269">
    <property type="term" value="P:DNA replication, synthesis of primer"/>
    <property type="evidence" value="ECO:0007669"/>
    <property type="project" value="UniProtKB-KW"/>
</dbReference>
<dbReference type="CDD" id="cd04496">
    <property type="entry name" value="SSB_OBF"/>
    <property type="match status" value="1"/>
</dbReference>
<dbReference type="FunFam" id="2.40.50.140:FF:000077">
    <property type="entry name" value="Primosomal replication protein N"/>
    <property type="match status" value="1"/>
</dbReference>
<dbReference type="Gene3D" id="2.40.50.140">
    <property type="entry name" value="Nucleic acid-binding proteins"/>
    <property type="match status" value="1"/>
</dbReference>
<dbReference type="HAMAP" id="MF_00720">
    <property type="entry name" value="PriB"/>
    <property type="match status" value="1"/>
</dbReference>
<dbReference type="InterPro" id="IPR012340">
    <property type="entry name" value="NA-bd_OB-fold"/>
</dbReference>
<dbReference type="InterPro" id="IPR000424">
    <property type="entry name" value="Primosome_PriB/ssb"/>
</dbReference>
<dbReference type="InterPro" id="IPR023646">
    <property type="entry name" value="Prisomal_replication_PriB"/>
</dbReference>
<dbReference type="NCBIfam" id="TIGR04418">
    <property type="entry name" value="PriB_gamma"/>
    <property type="match status" value="1"/>
</dbReference>
<dbReference type="Pfam" id="PF22657">
    <property type="entry name" value="SSB_1"/>
    <property type="match status" value="1"/>
</dbReference>
<dbReference type="PIRSF" id="PIRSF003135">
    <property type="entry name" value="Primosomal_n"/>
    <property type="match status" value="1"/>
</dbReference>
<dbReference type="SUPFAM" id="SSF50249">
    <property type="entry name" value="Nucleic acid-binding proteins"/>
    <property type="match status" value="1"/>
</dbReference>
<dbReference type="PROSITE" id="PS50935">
    <property type="entry name" value="SSB"/>
    <property type="match status" value="1"/>
</dbReference>
<evidence type="ECO:0000255" key="1">
    <source>
        <dbReference type="HAMAP-Rule" id="MF_00720"/>
    </source>
</evidence>
<gene>
    <name evidence="1" type="primary">priB</name>
    <name type="ordered locus">BWG_3913</name>
</gene>
<feature type="chain" id="PRO_1000212703" description="Replication restart protein PriB">
    <location>
        <begin position="1"/>
        <end position="104"/>
    </location>
</feature>
<feature type="domain" description="SSB" evidence="1">
    <location>
        <begin position="1"/>
        <end position="101"/>
    </location>
</feature>
<comment type="function">
    <text evidence="1">Involved in the restart of stalled replication forks, which reloads the replicative helicase on sites other than the origin of replication; the PriA-PriB pathway is the major replication restart pathway. During primosome assembly it facilitates complex formation between PriA and DnaT on DNA; stabilizes PriA on DNA. Stimulates the DNA unwinding activity of PriA helicase.</text>
</comment>
<comment type="subunit">
    <text evidence="1">Homodimer. Interacts with PriA and DnaT. Component of the replication restart primosome. Primosome assembly occurs via a 'hand-off' mechanism. PriA binds to replication forks, subsequently PriB then DnaT bind; DnaT then displaces ssDNA to generate the helicase loading substrate.</text>
</comment>
<comment type="similarity">
    <text evidence="1">Belongs to the PriB family.</text>
</comment>